<protein>
    <recommendedName>
        <fullName evidence="9">Parvalbumin beta</fullName>
    </recommendedName>
    <alternativeName>
        <fullName evidence="8 11">Dark muscle parvalbumin</fullName>
        <shortName evidence="11">aji-DPA</shortName>
    </alternativeName>
    <alternativeName>
        <fullName evidence="8 10">White muscle parvalbumin</fullName>
        <shortName evidence="10">aji-WPA</shortName>
    </alternativeName>
    <allergenName evidence="9">Tra j 1</allergenName>
</protein>
<proteinExistence type="evidence at protein level"/>
<feature type="initiator methionine" description="Removed" evidence="1">
    <location>
        <position position="1"/>
    </location>
</feature>
<feature type="chain" id="PRO_0000447296" description="Parvalbumin beta">
    <location>
        <begin position="2"/>
        <end position="107"/>
    </location>
</feature>
<feature type="domain" description="EF-hand 1" evidence="6">
    <location>
        <begin position="37"/>
        <end position="72"/>
    </location>
</feature>
<feature type="domain" description="EF-hand 2" evidence="6">
    <location>
        <begin position="76"/>
        <end position="107"/>
    </location>
</feature>
<feature type="binding site" evidence="2 6">
    <location>
        <position position="50"/>
    </location>
    <ligand>
        <name>Ca(2+)</name>
        <dbReference type="ChEBI" id="CHEBI:29108"/>
        <label>1</label>
    </ligand>
</feature>
<feature type="binding site" evidence="2 6">
    <location>
        <position position="52"/>
    </location>
    <ligand>
        <name>Ca(2+)</name>
        <dbReference type="ChEBI" id="CHEBI:29108"/>
        <label>1</label>
    </ligand>
</feature>
<feature type="binding site" evidence="2 6">
    <location>
        <position position="54"/>
    </location>
    <ligand>
        <name>Ca(2+)</name>
        <dbReference type="ChEBI" id="CHEBI:29108"/>
        <label>1</label>
    </ligand>
</feature>
<feature type="binding site" evidence="2">
    <location>
        <position position="56"/>
    </location>
    <ligand>
        <name>Ca(2+)</name>
        <dbReference type="ChEBI" id="CHEBI:29108"/>
        <label>1</label>
    </ligand>
</feature>
<feature type="binding site" evidence="4">
    <location>
        <position position="58"/>
    </location>
    <ligand>
        <name>Ca(2+)</name>
        <dbReference type="ChEBI" id="CHEBI:29108"/>
        <label>1</label>
    </ligand>
</feature>
<feature type="binding site" evidence="2 6">
    <location>
        <position position="61"/>
    </location>
    <ligand>
        <name>Ca(2+)</name>
        <dbReference type="ChEBI" id="CHEBI:29108"/>
        <label>1</label>
    </ligand>
</feature>
<feature type="binding site" evidence="2 6">
    <location>
        <position position="89"/>
    </location>
    <ligand>
        <name>Ca(2+)</name>
        <dbReference type="ChEBI" id="CHEBI:29108"/>
        <label>2</label>
    </ligand>
</feature>
<feature type="binding site" evidence="2 6">
    <location>
        <position position="91"/>
    </location>
    <ligand>
        <name>Ca(2+)</name>
        <dbReference type="ChEBI" id="CHEBI:29108"/>
        <label>2</label>
    </ligand>
</feature>
<feature type="binding site" evidence="2 6">
    <location>
        <position position="93"/>
    </location>
    <ligand>
        <name>Ca(2+)</name>
        <dbReference type="ChEBI" id="CHEBI:29108"/>
        <label>2</label>
    </ligand>
</feature>
<feature type="binding site" evidence="2 6">
    <location>
        <position position="95"/>
    </location>
    <ligand>
        <name>Ca(2+)</name>
        <dbReference type="ChEBI" id="CHEBI:29108"/>
        <label>2</label>
    </ligand>
</feature>
<feature type="binding site" evidence="2 6">
    <location>
        <position position="100"/>
    </location>
    <ligand>
        <name>Ca(2+)</name>
        <dbReference type="ChEBI" id="CHEBI:29108"/>
        <label>2</label>
    </ligand>
</feature>
<reference evidence="11" key="1">
    <citation type="journal article" date="2006" name="Allergy">
        <title>Comparison of allergenicity and allergens between fish white and dark muscles.</title>
        <authorList>
            <person name="Kobayashi A."/>
            <person name="Tanaka H."/>
            <person name="Hamada Y."/>
            <person name="Ishizaki S."/>
            <person name="Nagashima Y."/>
            <person name="Shiomi K."/>
        </authorList>
    </citation>
    <scope>NUCLEOTIDE SEQUENCE [MRNA]</scope>
    <scope>TISSUE SPECIFICITY</scope>
    <scope>ALLERGEN</scope>
    <source>
        <tissue evidence="8">Muscle</tissue>
    </source>
</reference>
<accession>Q3C2C4</accession>
<evidence type="ECO:0000250" key="1">
    <source>
        <dbReference type="UniProtKB" id="P09227"/>
    </source>
</evidence>
<evidence type="ECO:0000250" key="2">
    <source>
        <dbReference type="UniProtKB" id="P59747"/>
    </source>
</evidence>
<evidence type="ECO:0000250" key="3">
    <source>
        <dbReference type="UniProtKB" id="P86432"/>
    </source>
</evidence>
<evidence type="ECO:0000250" key="4">
    <source>
        <dbReference type="UniProtKB" id="Q90YK9"/>
    </source>
</evidence>
<evidence type="ECO:0000255" key="5"/>
<evidence type="ECO:0000255" key="6">
    <source>
        <dbReference type="PROSITE-ProRule" id="PRU00448"/>
    </source>
</evidence>
<evidence type="ECO:0000269" key="7">
    <source>
    </source>
</evidence>
<evidence type="ECO:0000303" key="8">
    <source>
    </source>
</evidence>
<evidence type="ECO:0000305" key="9"/>
<evidence type="ECO:0000312" key="10">
    <source>
        <dbReference type="EMBL" id="BAE46762.1"/>
    </source>
</evidence>
<evidence type="ECO:0000312" key="11">
    <source>
        <dbReference type="EMBL" id="BAE46763.1"/>
    </source>
</evidence>
<keyword id="KW-0020">Allergen</keyword>
<keyword id="KW-0106">Calcium</keyword>
<keyword id="KW-0479">Metal-binding</keyword>
<keyword id="KW-0514">Muscle protein</keyword>
<keyword id="KW-0677">Repeat</keyword>
<name>PRVB_TRAJP</name>
<sequence>MAFKGVLNDADVTAALDGCKSAFDHKAFFKACGLAAKSADDIKKAFAIIDQDKSGFIEEDELKLFLQNFCAGARALSDAETKAFLKAGDSDGDGKIGVDEFAAMVKH</sequence>
<comment type="function">
    <text evidence="3">In muscle, parvalbumin is thought to be involved in relaxation after contraction. It binds two calcium ions.</text>
</comment>
<comment type="tissue specificity">
    <text evidence="7">Expressed in both white and dark muscles (at protein level). About five times lower expression in the dark muscle than in the white muscle (at protein level).</text>
</comment>
<comment type="allergen">
    <text evidence="7">Causes an allergic reaction in human. Binds to IgE in patients allergic to fish parvalbumin.</text>
</comment>
<comment type="similarity">
    <text evidence="5 9">Belongs to the parvalbumin family.</text>
</comment>
<organism evidence="11">
    <name type="scientific">Trachurus japonicus</name>
    <name type="common">Japanese jack mackerel</name>
    <dbReference type="NCBI Taxonomy" id="83875"/>
    <lineage>
        <taxon>Eukaryota</taxon>
        <taxon>Metazoa</taxon>
        <taxon>Chordata</taxon>
        <taxon>Craniata</taxon>
        <taxon>Vertebrata</taxon>
        <taxon>Euteleostomi</taxon>
        <taxon>Actinopterygii</taxon>
        <taxon>Neopterygii</taxon>
        <taxon>Teleostei</taxon>
        <taxon>Neoteleostei</taxon>
        <taxon>Acanthomorphata</taxon>
        <taxon>Carangaria</taxon>
        <taxon>Carangiformes</taxon>
        <taxon>Carangidae</taxon>
        <taxon>Trachurus</taxon>
    </lineage>
</organism>
<dbReference type="EMBL" id="AB211364">
    <property type="protein sequence ID" value="BAE46762.1"/>
    <property type="molecule type" value="mRNA"/>
</dbReference>
<dbReference type="EMBL" id="AB211365">
    <property type="protein sequence ID" value="BAE46763.1"/>
    <property type="molecule type" value="mRNA"/>
</dbReference>
<dbReference type="SMR" id="Q3C2C4"/>
<dbReference type="Allergome" id="2713">
    <property type="allergen name" value="Tra j 1"/>
</dbReference>
<dbReference type="GO" id="GO:0005737">
    <property type="term" value="C:cytoplasm"/>
    <property type="evidence" value="ECO:0007669"/>
    <property type="project" value="TreeGrafter"/>
</dbReference>
<dbReference type="GO" id="GO:0005509">
    <property type="term" value="F:calcium ion binding"/>
    <property type="evidence" value="ECO:0000250"/>
    <property type="project" value="UniProtKB"/>
</dbReference>
<dbReference type="CDD" id="cd16255">
    <property type="entry name" value="EFh_parvalbumin_beta"/>
    <property type="match status" value="1"/>
</dbReference>
<dbReference type="FunFam" id="1.10.238.10:FF:000060">
    <property type="entry name" value="Parvalbumin, thymic"/>
    <property type="match status" value="1"/>
</dbReference>
<dbReference type="Gene3D" id="1.10.238.10">
    <property type="entry name" value="EF-hand"/>
    <property type="match status" value="1"/>
</dbReference>
<dbReference type="InterPro" id="IPR011992">
    <property type="entry name" value="EF-hand-dom_pair"/>
</dbReference>
<dbReference type="InterPro" id="IPR018247">
    <property type="entry name" value="EF_Hand_1_Ca_BS"/>
</dbReference>
<dbReference type="InterPro" id="IPR002048">
    <property type="entry name" value="EF_hand_dom"/>
</dbReference>
<dbReference type="InterPro" id="IPR008080">
    <property type="entry name" value="Parvalbumin"/>
</dbReference>
<dbReference type="PANTHER" id="PTHR11653:SF12">
    <property type="entry name" value="PARVALBUMIN"/>
    <property type="match status" value="1"/>
</dbReference>
<dbReference type="PANTHER" id="PTHR11653">
    <property type="entry name" value="PARVALBUMIN ALPHA"/>
    <property type="match status" value="1"/>
</dbReference>
<dbReference type="Pfam" id="PF13499">
    <property type="entry name" value="EF-hand_7"/>
    <property type="match status" value="1"/>
</dbReference>
<dbReference type="PRINTS" id="PR01697">
    <property type="entry name" value="PARVALBUMIN"/>
</dbReference>
<dbReference type="SMART" id="SM00054">
    <property type="entry name" value="EFh"/>
    <property type="match status" value="2"/>
</dbReference>
<dbReference type="SUPFAM" id="SSF47473">
    <property type="entry name" value="EF-hand"/>
    <property type="match status" value="1"/>
</dbReference>
<dbReference type="PROSITE" id="PS00018">
    <property type="entry name" value="EF_HAND_1"/>
    <property type="match status" value="2"/>
</dbReference>
<dbReference type="PROSITE" id="PS50222">
    <property type="entry name" value="EF_HAND_2"/>
    <property type="match status" value="2"/>
</dbReference>